<sequence>MDMGGNGMAMPPPPAPVKKARYMHMTFFWGKNTEVLFTLWPGARGGMYALAILFMFALAVLLEFRGYRVLEARLARRRAPRAAAALRTAVHAVRVGVAYLIMLALMSFNGGVFLAIVAGHAAGFLAFRAGLCGGGPAPPLEEDRKNDPVCC</sequence>
<reference key="1">
    <citation type="journal article" date="2005" name="Mol. Genet. Genomics">
        <title>A fine physical map of the rice chromosome 5.</title>
        <authorList>
            <person name="Cheng C.-H."/>
            <person name="Chung M.C."/>
            <person name="Liu S.-M."/>
            <person name="Chen S.-K."/>
            <person name="Kao F.Y."/>
            <person name="Lin S.-J."/>
            <person name="Hsiao S.-H."/>
            <person name="Tseng I.C."/>
            <person name="Hsing Y.-I.C."/>
            <person name="Wu H.-P."/>
            <person name="Chen C.-S."/>
            <person name="Shaw J.-F."/>
            <person name="Wu J."/>
            <person name="Matsumoto T."/>
            <person name="Sasaki T."/>
            <person name="Chen H.-C."/>
            <person name="Chow T.-Y."/>
        </authorList>
    </citation>
    <scope>NUCLEOTIDE SEQUENCE [LARGE SCALE GENOMIC DNA]</scope>
    <source>
        <strain>cv. Nipponbare</strain>
    </source>
</reference>
<reference key="2">
    <citation type="journal article" date="2005" name="Nature">
        <title>The map-based sequence of the rice genome.</title>
        <authorList>
            <consortium name="International rice genome sequencing project (IRGSP)"/>
        </authorList>
    </citation>
    <scope>NUCLEOTIDE SEQUENCE [LARGE SCALE GENOMIC DNA]</scope>
    <source>
        <strain>cv. Nipponbare</strain>
    </source>
</reference>
<reference key="3">
    <citation type="journal article" date="2008" name="Nucleic Acids Res.">
        <title>The rice annotation project database (RAP-DB): 2008 update.</title>
        <authorList>
            <consortium name="The rice annotation project (RAP)"/>
        </authorList>
    </citation>
    <scope>GENOME REANNOTATION</scope>
    <source>
        <strain>cv. Nipponbare</strain>
    </source>
</reference>
<reference key="4">
    <citation type="journal article" date="2013" name="Rice">
        <title>Improvement of the Oryza sativa Nipponbare reference genome using next generation sequence and optical map data.</title>
        <authorList>
            <person name="Kawahara Y."/>
            <person name="de la Bastide M."/>
            <person name="Hamilton J.P."/>
            <person name="Kanamori H."/>
            <person name="McCombie W.R."/>
            <person name="Ouyang S."/>
            <person name="Schwartz D.C."/>
            <person name="Tanaka T."/>
            <person name="Wu J."/>
            <person name="Zhou S."/>
            <person name="Childs K.L."/>
            <person name="Davidson R.M."/>
            <person name="Lin H."/>
            <person name="Quesada-Ocampo L."/>
            <person name="Vaillancourt B."/>
            <person name="Sakai H."/>
            <person name="Lee S.S."/>
            <person name="Kim J."/>
            <person name="Numa H."/>
            <person name="Itoh T."/>
            <person name="Buell C.R."/>
            <person name="Matsumoto T."/>
        </authorList>
    </citation>
    <scope>GENOME REANNOTATION</scope>
    <source>
        <strain>cv. Nipponbare</strain>
    </source>
</reference>
<reference key="5">
    <citation type="journal article" date="2003" name="Science">
        <title>Collection, mapping, and annotation of over 28,000 cDNA clones from japonica rice.</title>
        <authorList>
            <consortium name="The rice full-length cDNA consortium"/>
        </authorList>
    </citation>
    <scope>NUCLEOTIDE SEQUENCE [LARGE SCALE MRNA]</scope>
    <source>
        <strain>cv. Nipponbare</strain>
    </source>
</reference>
<reference key="6">
    <citation type="journal article" date="2010" name="Plant Cell">
        <title>Rice xa13 recessive resistance to bacterial blight is defeated by induction of the disease susceptibility gene Os-11N3. The bacterial pathogen Xanthomonas oryzae overcomes rice defenses by regulating host copper redistribution.</title>
        <authorList>
            <person name="Antony G."/>
            <person name="Zhou J."/>
            <person name="Huang S."/>
            <person name="Li T."/>
            <person name="Liu B."/>
            <person name="White F."/>
            <person name="Yang B."/>
            <person name="Yuan M."/>
            <person name="Chu Z."/>
            <person name="Li X."/>
            <person name="Xu C."/>
            <person name="Wang S."/>
        </authorList>
    </citation>
    <scope>FUNCTION</scope>
    <scope>INTERACTION WITH SWEET11 AND COPT1</scope>
    <scope>SUBCELLULAR LOCATION</scope>
    <scope>DISRUPTION PHENOTYPE</scope>
    <source>
        <strain>cv. Mudanjiang 8</strain>
        <strain>cv. Zhonghua 11</strain>
    </source>
</reference>
<dbReference type="EMBL" id="AC109595">
    <property type="protein sequence ID" value="AAV24776.1"/>
    <property type="molecule type" value="Genomic_DNA"/>
</dbReference>
<dbReference type="EMBL" id="AP008211">
    <property type="protein sequence ID" value="BAF17508.1"/>
    <property type="molecule type" value="Genomic_DNA"/>
</dbReference>
<dbReference type="EMBL" id="AP014961">
    <property type="protein sequence ID" value="BAS94104.1"/>
    <property type="molecule type" value="Genomic_DNA"/>
</dbReference>
<dbReference type="EMBL" id="AK107848">
    <property type="protein sequence ID" value="BAG98176.1"/>
    <property type="molecule type" value="mRNA"/>
</dbReference>
<dbReference type="RefSeq" id="XP_015638992.1">
    <property type="nucleotide sequence ID" value="XM_015783506.1"/>
</dbReference>
<dbReference type="SMR" id="Q60EN8"/>
<dbReference type="FunCoup" id="Q60EN8">
    <property type="interactions" value="670"/>
</dbReference>
<dbReference type="STRING" id="39947.Q60EN8"/>
<dbReference type="PaxDb" id="39947-Q60EN8"/>
<dbReference type="EnsemblPlants" id="Os05t0424700-01">
    <property type="protein sequence ID" value="Os05t0424700-01"/>
    <property type="gene ID" value="Os05g0424700"/>
</dbReference>
<dbReference type="Gramene" id="Os05t0424700-01">
    <property type="protein sequence ID" value="Os05t0424700-01"/>
    <property type="gene ID" value="Os05g0424700"/>
</dbReference>
<dbReference type="KEGG" id="dosa:Os05g0424700"/>
<dbReference type="eggNOG" id="KOG3386">
    <property type="taxonomic scope" value="Eukaryota"/>
</dbReference>
<dbReference type="HOGENOM" id="CLU_079690_1_0_1"/>
<dbReference type="InParanoid" id="Q60EN8"/>
<dbReference type="OMA" id="LWKTIVH"/>
<dbReference type="OrthoDB" id="73901at2759"/>
<dbReference type="Proteomes" id="UP000000763">
    <property type="component" value="Chromosome 5"/>
</dbReference>
<dbReference type="Proteomes" id="UP000059680">
    <property type="component" value="Chromosome 5"/>
</dbReference>
<dbReference type="ExpressionAtlas" id="Q60EN8">
    <property type="expression patterns" value="baseline and differential"/>
</dbReference>
<dbReference type="GO" id="GO:0005886">
    <property type="term" value="C:plasma membrane"/>
    <property type="evidence" value="ECO:0000314"/>
    <property type="project" value="UniProtKB"/>
</dbReference>
<dbReference type="GO" id="GO:0005375">
    <property type="term" value="F:copper ion transmembrane transporter activity"/>
    <property type="evidence" value="ECO:0000315"/>
    <property type="project" value="UniProtKB"/>
</dbReference>
<dbReference type="GO" id="GO:0051119">
    <property type="term" value="F:sugar transmembrane transporter activity"/>
    <property type="evidence" value="ECO:0000250"/>
    <property type="project" value="UniProtKB"/>
</dbReference>
<dbReference type="GO" id="GO:0006825">
    <property type="term" value="P:copper ion transport"/>
    <property type="evidence" value="ECO:0000315"/>
    <property type="project" value="UniProtKB"/>
</dbReference>
<dbReference type="GO" id="GO:0006952">
    <property type="term" value="P:defense response"/>
    <property type="evidence" value="ECO:0007669"/>
    <property type="project" value="UniProtKB-KW"/>
</dbReference>
<dbReference type="InterPro" id="IPR007274">
    <property type="entry name" value="Cop_transporter"/>
</dbReference>
<dbReference type="PANTHER" id="PTHR12483:SF117">
    <property type="entry name" value="COPPER TRANSPORTER 3"/>
    <property type="match status" value="1"/>
</dbReference>
<dbReference type="PANTHER" id="PTHR12483">
    <property type="entry name" value="SOLUTE CARRIER FAMILY 31 COPPER TRANSPORTERS"/>
    <property type="match status" value="1"/>
</dbReference>
<dbReference type="Pfam" id="PF04145">
    <property type="entry name" value="Ctr"/>
    <property type="match status" value="2"/>
</dbReference>
<comment type="function">
    <text evidence="2">Involved in the transport of copper, in cooperation with SWEET11 and COPT1. Contributes to the removal of copper (Cu) from xylem, and thus to the sensitivity toward bacterial pathogens such as X.oryzae pv. oryzae (Xoo).</text>
</comment>
<comment type="subunit">
    <text evidence="2">Self-interacts. Interacts with SWEET11 and COPT1.</text>
</comment>
<comment type="subcellular location">
    <subcellularLocation>
        <location evidence="2">Cell membrane</location>
        <topology evidence="2">Multi-pass membrane protein</topology>
    </subcellularLocation>
</comment>
<comment type="disruption phenotype">
    <text evidence="2">Reduced copper transport ability, increase in copper content of the xylem, and enhanced resistance against X.oryzae pv. oryzae (Xoo) PXO99.</text>
</comment>
<comment type="similarity">
    <text evidence="3">Belongs to the copper transporter (Ctr) (TC 1.A.56) family. SLC31A subfamily.</text>
</comment>
<name>COPT2_ORYSJ</name>
<protein>
    <recommendedName>
        <fullName>Copper transporter 2</fullName>
        <shortName>OsCOPT2</shortName>
    </recommendedName>
</protein>
<feature type="chain" id="PRO_0000399999" description="Copper transporter 2">
    <location>
        <begin position="1"/>
        <end position="151"/>
    </location>
</feature>
<feature type="transmembrane region" description="Helical" evidence="1">
    <location>
        <begin position="42"/>
        <end position="62"/>
    </location>
</feature>
<feature type="transmembrane region" description="Helical" evidence="1">
    <location>
        <begin position="97"/>
        <end position="117"/>
    </location>
</feature>
<gene>
    <name type="primary">COPT2</name>
    <name type="ordered locus">Os05g0424700</name>
    <name type="ordered locus">LOC_Os05g35050</name>
    <name type="ORF">OJ1212_B02.11</name>
</gene>
<keyword id="KW-1003">Cell membrane</keyword>
<keyword id="KW-0186">Copper</keyword>
<keyword id="KW-0187">Copper transport</keyword>
<keyword id="KW-0406">Ion transport</keyword>
<keyword id="KW-0472">Membrane</keyword>
<keyword id="KW-0611">Plant defense</keyword>
<keyword id="KW-1185">Reference proteome</keyword>
<keyword id="KW-0812">Transmembrane</keyword>
<keyword id="KW-1133">Transmembrane helix</keyword>
<keyword id="KW-0813">Transport</keyword>
<organism>
    <name type="scientific">Oryza sativa subsp. japonica</name>
    <name type="common">Rice</name>
    <dbReference type="NCBI Taxonomy" id="39947"/>
    <lineage>
        <taxon>Eukaryota</taxon>
        <taxon>Viridiplantae</taxon>
        <taxon>Streptophyta</taxon>
        <taxon>Embryophyta</taxon>
        <taxon>Tracheophyta</taxon>
        <taxon>Spermatophyta</taxon>
        <taxon>Magnoliopsida</taxon>
        <taxon>Liliopsida</taxon>
        <taxon>Poales</taxon>
        <taxon>Poaceae</taxon>
        <taxon>BOP clade</taxon>
        <taxon>Oryzoideae</taxon>
        <taxon>Oryzeae</taxon>
        <taxon>Oryzinae</taxon>
        <taxon>Oryza</taxon>
        <taxon>Oryza sativa</taxon>
    </lineage>
</organism>
<evidence type="ECO:0000255" key="1"/>
<evidence type="ECO:0000269" key="2">
    <source>
    </source>
</evidence>
<evidence type="ECO:0000305" key="3"/>
<proteinExistence type="evidence at protein level"/>
<accession>Q60EN8</accession>